<keyword id="KW-0012">Acyltransferase</keyword>
<keyword id="KW-1185">Reference proteome</keyword>
<keyword id="KW-0808">Transferase</keyword>
<protein>
    <recommendedName>
        <fullName evidence="1">Alpha-tubulin N-acetyltransferase</fullName>
        <shortName evidence="1">Alpha-TAT</shortName>
        <shortName evidence="1">TAT</shortName>
        <ecNumber evidence="1">2.3.1.108</ecNumber>
    </recommendedName>
    <alternativeName>
        <fullName evidence="1">Acetyltransferase mec-17 homolog</fullName>
    </alternativeName>
</protein>
<proteinExistence type="inferred from homology"/>
<gene>
    <name type="ORF">LmjF25.1150</name>
    <name type="ORF">LmjF_25_1150</name>
</gene>
<reference key="1">
    <citation type="journal article" date="2005" name="Science">
        <title>The genome of the kinetoplastid parasite, Leishmania major.</title>
        <authorList>
            <person name="Ivens A.C."/>
            <person name="Peacock C.S."/>
            <person name="Worthey E.A."/>
            <person name="Murphy L."/>
            <person name="Aggarwal G."/>
            <person name="Berriman M."/>
            <person name="Sisk E."/>
            <person name="Rajandream M.A."/>
            <person name="Adlem E."/>
            <person name="Aert R."/>
            <person name="Anupama A."/>
            <person name="Apostolou Z."/>
            <person name="Attipoe P."/>
            <person name="Bason N."/>
            <person name="Bauser C."/>
            <person name="Beck A."/>
            <person name="Beverley S.M."/>
            <person name="Bianchettin G."/>
            <person name="Borzym K."/>
            <person name="Bothe G."/>
            <person name="Bruschi C.V."/>
            <person name="Collins M."/>
            <person name="Cadag E."/>
            <person name="Ciarloni L."/>
            <person name="Clayton C."/>
            <person name="Coulson R.M.R."/>
            <person name="Cronin A."/>
            <person name="Cruz A.K."/>
            <person name="Davies R.M."/>
            <person name="De Gaudenzi J."/>
            <person name="Dobson D.E."/>
            <person name="Duesterhoeft A."/>
            <person name="Fazelina G."/>
            <person name="Fosker N."/>
            <person name="Frasch A.C."/>
            <person name="Fraser A."/>
            <person name="Fuchs M."/>
            <person name="Gabel C."/>
            <person name="Goble A."/>
            <person name="Goffeau A."/>
            <person name="Harris D."/>
            <person name="Hertz-Fowler C."/>
            <person name="Hilbert H."/>
            <person name="Horn D."/>
            <person name="Huang Y."/>
            <person name="Klages S."/>
            <person name="Knights A."/>
            <person name="Kube M."/>
            <person name="Larke N."/>
            <person name="Litvin L."/>
            <person name="Lord A."/>
            <person name="Louie T."/>
            <person name="Marra M."/>
            <person name="Masuy D."/>
            <person name="Matthews K."/>
            <person name="Michaeli S."/>
            <person name="Mottram J.C."/>
            <person name="Mueller-Auer S."/>
            <person name="Munden H."/>
            <person name="Nelson S."/>
            <person name="Norbertczak H."/>
            <person name="Oliver K."/>
            <person name="O'neil S."/>
            <person name="Pentony M."/>
            <person name="Pohl T.M."/>
            <person name="Price C."/>
            <person name="Purnelle B."/>
            <person name="Quail M.A."/>
            <person name="Rabbinowitsch E."/>
            <person name="Reinhardt R."/>
            <person name="Rieger M."/>
            <person name="Rinta J."/>
            <person name="Robben J."/>
            <person name="Robertson L."/>
            <person name="Ruiz J.C."/>
            <person name="Rutter S."/>
            <person name="Saunders D."/>
            <person name="Schaefer M."/>
            <person name="Schein J."/>
            <person name="Schwartz D.C."/>
            <person name="Seeger K."/>
            <person name="Seyler A."/>
            <person name="Sharp S."/>
            <person name="Shin H."/>
            <person name="Sivam D."/>
            <person name="Squares R."/>
            <person name="Squares S."/>
            <person name="Tosato V."/>
            <person name="Vogt C."/>
            <person name="Volckaert G."/>
            <person name="Wambutt R."/>
            <person name="Warren T."/>
            <person name="Wedler H."/>
            <person name="Woodward J."/>
            <person name="Zhou S."/>
            <person name="Zimmermann W."/>
            <person name="Smith D.F."/>
            <person name="Blackwell J.M."/>
            <person name="Stuart K.D."/>
            <person name="Barrell B.G."/>
            <person name="Myler P.J."/>
        </authorList>
    </citation>
    <scope>NUCLEOTIDE SEQUENCE [LARGE SCALE GENOMIC DNA]</scope>
    <source>
        <strain>MHOM/IL/81/Friedlin</strain>
    </source>
</reference>
<accession>Q4Q9X8</accession>
<evidence type="ECO:0000255" key="1">
    <source>
        <dbReference type="HAMAP-Rule" id="MF_03130"/>
    </source>
</evidence>
<comment type="function">
    <text evidence="1">Specifically acetylates 'Lys-40' in alpha-tubulin on the lumenal side of microtubules. Promotes microtubule destabilization and accelerates microtubule dynamics; this activity may be independent of acetylation activity. Acetylates alpha-tubulin with a slow enzymatic rate, due to a catalytic site that is not optimized for acetyl transfer. Enters the microtubule through each end and diffuses quickly throughout the lumen of microtubules. Acetylates only long/old microtubules because of its slow acetylation rate since it does not have time to act on dynamically unstable microtubules before the enzyme is released.</text>
</comment>
<comment type="catalytic activity">
    <reaction evidence="1">
        <text>L-lysyl-[alpha-tubulin] + acetyl-CoA = N(6)-acetyl-L-lysyl-[alpha-tubulin] + CoA + H(+)</text>
        <dbReference type="Rhea" id="RHEA:15277"/>
        <dbReference type="Rhea" id="RHEA-COMP:11278"/>
        <dbReference type="Rhea" id="RHEA-COMP:11279"/>
        <dbReference type="ChEBI" id="CHEBI:15378"/>
        <dbReference type="ChEBI" id="CHEBI:29969"/>
        <dbReference type="ChEBI" id="CHEBI:57287"/>
        <dbReference type="ChEBI" id="CHEBI:57288"/>
        <dbReference type="ChEBI" id="CHEBI:61930"/>
        <dbReference type="EC" id="2.3.1.108"/>
    </reaction>
</comment>
<comment type="similarity">
    <text evidence="1">Belongs to the acetyltransferase ATAT1 family.</text>
</comment>
<feature type="chain" id="PRO_0000402084" description="Alpha-tubulin N-acetyltransferase">
    <location>
        <begin position="1"/>
        <end position="246"/>
    </location>
</feature>
<feature type="domain" description="N-acetyltransferase" evidence="1">
    <location>
        <begin position="21"/>
        <end position="202"/>
    </location>
</feature>
<feature type="binding site" evidence="1">
    <location>
        <begin position="135"/>
        <end position="148"/>
    </location>
    <ligand>
        <name>acetyl-CoA</name>
        <dbReference type="ChEBI" id="CHEBI:57288"/>
    </ligand>
</feature>
<feature type="binding site" evidence="1">
    <location>
        <begin position="172"/>
        <end position="181"/>
    </location>
    <ligand>
        <name>acetyl-CoA</name>
        <dbReference type="ChEBI" id="CHEBI:57288"/>
    </ligand>
</feature>
<feature type="site" description="Crucial for catalytic activity" evidence="1">
    <location>
        <position position="74"/>
    </location>
</feature>
<sequence>MRRRPPQLTKTKLADEEVPELTLVPDGVSRWTGSDLDALLNAARRGGAEAAQQDLERKLCRTIDILGARSQQAQEINAVLTSVARLRENSTFRLYLLTQNHRGVGILKVGVKKLFVTHPVTCGLVEVDPLCVLDFYVDESCQRQGYGKMLYSHMLKAEHVSRPEVLAIDRPSNKLLGFLRKHYGLAAYTPQVNNFVVFHSFFDHTTVSERGKLLRAPSPARASPFPSSANATVAIGGAKAKNWTPG</sequence>
<name>ATAT_LEIMA</name>
<dbReference type="EC" id="2.3.1.108" evidence="1"/>
<dbReference type="EMBL" id="FR796421">
    <property type="protein sequence ID" value="CAJ05171.1"/>
    <property type="molecule type" value="Genomic_DNA"/>
</dbReference>
<dbReference type="RefSeq" id="XP_001683870.1">
    <property type="nucleotide sequence ID" value="XM_001683818.1"/>
</dbReference>
<dbReference type="SMR" id="Q4Q9X8"/>
<dbReference type="EnsemblProtists" id="CAJ05171">
    <property type="protein sequence ID" value="CAJ05171"/>
    <property type="gene ID" value="LMJF_25_1150"/>
</dbReference>
<dbReference type="GeneID" id="5652526"/>
<dbReference type="KEGG" id="lma:LMJF_25_1150"/>
<dbReference type="VEuPathDB" id="TriTrypDB:LmjF.25.1150"/>
<dbReference type="VEuPathDB" id="TriTrypDB:LMJFC_250019200"/>
<dbReference type="VEuPathDB" id="TriTrypDB:LMJLV39_250018300"/>
<dbReference type="VEuPathDB" id="TriTrypDB:LMJSD75_250018200"/>
<dbReference type="eggNOG" id="KOG4601">
    <property type="taxonomic scope" value="Eukaryota"/>
</dbReference>
<dbReference type="InParanoid" id="Q4Q9X8"/>
<dbReference type="OMA" id="LCCTIDI"/>
<dbReference type="Proteomes" id="UP000000542">
    <property type="component" value="Chromosome 25"/>
</dbReference>
<dbReference type="GO" id="GO:0097014">
    <property type="term" value="C:ciliary plasm"/>
    <property type="evidence" value="ECO:0000266"/>
    <property type="project" value="GeneDB"/>
</dbReference>
<dbReference type="GO" id="GO:0005737">
    <property type="term" value="C:cytoplasm"/>
    <property type="evidence" value="ECO:0000266"/>
    <property type="project" value="GeneDB"/>
</dbReference>
<dbReference type="GO" id="GO:0005874">
    <property type="term" value="C:microtubule"/>
    <property type="evidence" value="ECO:0007669"/>
    <property type="project" value="InterPro"/>
</dbReference>
<dbReference type="GO" id="GO:0031981">
    <property type="term" value="C:nuclear lumen"/>
    <property type="evidence" value="ECO:0000266"/>
    <property type="project" value="GeneDB"/>
</dbReference>
<dbReference type="GO" id="GO:0019799">
    <property type="term" value="F:tubulin N-acetyltransferase activity"/>
    <property type="evidence" value="ECO:0000318"/>
    <property type="project" value="GO_Central"/>
</dbReference>
<dbReference type="GO" id="GO:0000226">
    <property type="term" value="P:microtubule cytoskeleton organization"/>
    <property type="evidence" value="ECO:0000318"/>
    <property type="project" value="GO_Central"/>
</dbReference>
<dbReference type="GO" id="GO:0070507">
    <property type="term" value="P:regulation of microtubule cytoskeleton organization"/>
    <property type="evidence" value="ECO:0007669"/>
    <property type="project" value="UniProtKB-UniRule"/>
</dbReference>
<dbReference type="CDD" id="cd04301">
    <property type="entry name" value="NAT_SF"/>
    <property type="match status" value="1"/>
</dbReference>
<dbReference type="FunFam" id="3.40.630.30:FF:000166">
    <property type="entry name" value="Alpha-tubulin N-acetyltransferase"/>
    <property type="match status" value="1"/>
</dbReference>
<dbReference type="Gene3D" id="3.40.630.30">
    <property type="match status" value="1"/>
</dbReference>
<dbReference type="HAMAP" id="MF_03130">
    <property type="entry name" value="mec17"/>
    <property type="match status" value="1"/>
</dbReference>
<dbReference type="InterPro" id="IPR016181">
    <property type="entry name" value="Acyl_CoA_acyltransferase"/>
</dbReference>
<dbReference type="InterPro" id="IPR038746">
    <property type="entry name" value="Atat"/>
</dbReference>
<dbReference type="InterPro" id="IPR007965">
    <property type="entry name" value="GNAT_ATAT"/>
</dbReference>
<dbReference type="PANTHER" id="PTHR12327">
    <property type="entry name" value="ALPHA-TUBULIN N-ACETYLTRANSFERASE 1"/>
    <property type="match status" value="1"/>
</dbReference>
<dbReference type="PANTHER" id="PTHR12327:SF0">
    <property type="entry name" value="ALPHA-TUBULIN N-ACETYLTRANSFERASE 1"/>
    <property type="match status" value="1"/>
</dbReference>
<dbReference type="Pfam" id="PF05301">
    <property type="entry name" value="Acetyltransf_16"/>
    <property type="match status" value="1"/>
</dbReference>
<dbReference type="SUPFAM" id="SSF55729">
    <property type="entry name" value="Acyl-CoA N-acyltransferases (Nat)"/>
    <property type="match status" value="1"/>
</dbReference>
<dbReference type="PROSITE" id="PS51730">
    <property type="entry name" value="GNAT_ATAT"/>
    <property type="match status" value="1"/>
</dbReference>
<organism>
    <name type="scientific">Leishmania major</name>
    <dbReference type="NCBI Taxonomy" id="5664"/>
    <lineage>
        <taxon>Eukaryota</taxon>
        <taxon>Discoba</taxon>
        <taxon>Euglenozoa</taxon>
        <taxon>Kinetoplastea</taxon>
        <taxon>Metakinetoplastina</taxon>
        <taxon>Trypanosomatida</taxon>
        <taxon>Trypanosomatidae</taxon>
        <taxon>Leishmaniinae</taxon>
        <taxon>Leishmania</taxon>
    </lineage>
</organism>